<protein>
    <recommendedName>
        <fullName evidence="2">Ubiquitin-like modifier-activating enzyme 5</fullName>
        <shortName evidence="1">Ubiquitin-activating enzyme 5</shortName>
    </recommendedName>
    <alternativeName>
        <fullName evidence="2">UFM1-activating enzyme</fullName>
    </alternativeName>
</protein>
<comment type="function">
    <text evidence="1">E1-like enzyme which specifically catalyzes the first step in ufmylation. Activates ufm1 by first adenylating its C-terminal glycine residue with ATP, and thereafter linking this residue to the side chain of a cysteine residue in E1, yielding a ufm1-E1 thioester and free AMP. Activates ufm1 via a trans-binding mechanism, in which ufm1 interacts with distinct sites in both subunits of the uba5 homodimer. Trans-binding also promotes stabilization of the uba5 homodimer, and enhances ATP-binding. Transfer of ufm1 from uba5 to the E2-like enzyme UFC1 also takes place using a trans mechanism. Ufmylation plays a key role in various processes, such as ribosome recycling, response to DNA damage, interferon response or reticulophagy (also called ER-phagy).</text>
</comment>
<comment type="subunit">
    <text evidence="1">Homodimer; homodimerization is required for ufm1 activation. Interacts (via UIS motif) with ufm1; binds ufm1 via a trans-binding mechanism in which ufm1 interacts with distinct sites in both subunits of the uba5 homodimer. Interacts (via C-terminus) with ufc1.</text>
</comment>
<comment type="subcellular location">
    <subcellularLocation>
        <location evidence="1">Cytoplasm</location>
    </subcellularLocation>
    <subcellularLocation>
        <location evidence="1">Nucleus</location>
    </subcellularLocation>
    <subcellularLocation>
        <location evidence="1">Endoplasmic reticulum membrane</location>
    </subcellularLocation>
    <subcellularLocation>
        <location evidence="1">Golgi apparatus</location>
    </subcellularLocation>
</comment>
<comment type="domain">
    <text evidence="1">The UFC1-binding sequence (UFC) motif mediates interaction with UFC1.</text>
</comment>
<comment type="domain">
    <text evidence="1">The linker region is required to activate the active site of UFC1: it region moves next to active site of UFC1 to reduce the amount of water molecules in the vicinity of UFC1's active site and thereby elevate the nucleophilic activity of UFC1 active site.</text>
</comment>
<comment type="domain">
    <text evidence="1">The UFM1-interacting sequence (UIS) motif mediates interaction with both UFM1 and LC3/GABARAP proteins (GABARAP, GABARAPL1 and GABARAPL2).</text>
</comment>
<comment type="similarity">
    <text evidence="2">Belongs to the ubiquitin-activating E1 family. UBA5 subfamily.</text>
</comment>
<dbReference type="EMBL" id="BC106418">
    <property type="protein sequence ID" value="AAI06419.1"/>
    <property type="molecule type" value="mRNA"/>
</dbReference>
<dbReference type="RefSeq" id="NP_001089728.1">
    <property type="nucleotide sequence ID" value="NM_001096259.1"/>
</dbReference>
<dbReference type="SMR" id="Q3KQ23"/>
<dbReference type="BioGRID" id="592572">
    <property type="interactions" value="1"/>
</dbReference>
<dbReference type="IntAct" id="Q3KQ23">
    <property type="interactions" value="1"/>
</dbReference>
<dbReference type="GeneID" id="734791"/>
<dbReference type="KEGG" id="xla:734791"/>
<dbReference type="AGR" id="Xenbase:XB-GENE-955667"/>
<dbReference type="CTD" id="734791"/>
<dbReference type="Xenbase" id="XB-GENE-955667">
    <property type="gene designation" value="uba5.S"/>
</dbReference>
<dbReference type="OMA" id="MNIVKDY"/>
<dbReference type="OrthoDB" id="206053at2759"/>
<dbReference type="Proteomes" id="UP000186698">
    <property type="component" value="Chromosome 6S"/>
</dbReference>
<dbReference type="Bgee" id="734791">
    <property type="expression patterns" value="Expressed in pancreas and 19 other cell types or tissues"/>
</dbReference>
<dbReference type="GO" id="GO:0005737">
    <property type="term" value="C:cytoplasm"/>
    <property type="evidence" value="ECO:0000318"/>
    <property type="project" value="GO_Central"/>
</dbReference>
<dbReference type="GO" id="GO:0005829">
    <property type="term" value="C:cytosol"/>
    <property type="evidence" value="ECO:0000318"/>
    <property type="project" value="GO_Central"/>
</dbReference>
<dbReference type="GO" id="GO:0005789">
    <property type="term" value="C:endoplasmic reticulum membrane"/>
    <property type="evidence" value="ECO:0000250"/>
    <property type="project" value="UniProtKB"/>
</dbReference>
<dbReference type="GO" id="GO:0005794">
    <property type="term" value="C:Golgi apparatus"/>
    <property type="evidence" value="ECO:0007669"/>
    <property type="project" value="UniProtKB-SubCell"/>
</dbReference>
<dbReference type="GO" id="GO:0005634">
    <property type="term" value="C:nucleus"/>
    <property type="evidence" value="ECO:0007669"/>
    <property type="project" value="UniProtKB-SubCell"/>
</dbReference>
<dbReference type="GO" id="GO:0005524">
    <property type="term" value="F:ATP binding"/>
    <property type="evidence" value="ECO:0007669"/>
    <property type="project" value="UniProtKB-KW"/>
</dbReference>
<dbReference type="GO" id="GO:0042803">
    <property type="term" value="F:protein homodimerization activity"/>
    <property type="evidence" value="ECO:0000250"/>
    <property type="project" value="UniProtKB"/>
</dbReference>
<dbReference type="GO" id="GO:0071566">
    <property type="term" value="F:UFM1 activating enzyme activity"/>
    <property type="evidence" value="ECO:0000250"/>
    <property type="project" value="UniProtKB"/>
</dbReference>
<dbReference type="GO" id="GO:0008270">
    <property type="term" value="F:zinc ion binding"/>
    <property type="evidence" value="ECO:0000250"/>
    <property type="project" value="UniProtKB"/>
</dbReference>
<dbReference type="GO" id="GO:0030218">
    <property type="term" value="P:erythrocyte differentiation"/>
    <property type="evidence" value="ECO:0000250"/>
    <property type="project" value="UniProtKB"/>
</dbReference>
<dbReference type="GO" id="GO:0030219">
    <property type="term" value="P:megakaryocyte differentiation"/>
    <property type="evidence" value="ECO:0000250"/>
    <property type="project" value="UniProtKB"/>
</dbReference>
<dbReference type="GO" id="GO:1990592">
    <property type="term" value="P:protein K69-linked ufmylation"/>
    <property type="evidence" value="ECO:0000250"/>
    <property type="project" value="UniProtKB"/>
</dbReference>
<dbReference type="GO" id="GO:0071569">
    <property type="term" value="P:protein ufmylation"/>
    <property type="evidence" value="ECO:0000250"/>
    <property type="project" value="UniProtKB"/>
</dbReference>
<dbReference type="GO" id="GO:0034976">
    <property type="term" value="P:response to endoplasmic reticulum stress"/>
    <property type="evidence" value="ECO:0000250"/>
    <property type="project" value="UniProtKB"/>
</dbReference>
<dbReference type="GO" id="GO:0061709">
    <property type="term" value="P:reticulophagy"/>
    <property type="evidence" value="ECO:0000250"/>
    <property type="project" value="UniProtKB"/>
</dbReference>
<dbReference type="CDD" id="cd00757">
    <property type="entry name" value="ThiF_MoeB_HesA_family"/>
    <property type="match status" value="1"/>
</dbReference>
<dbReference type="FunFam" id="3.40.50.720:FF:000066">
    <property type="entry name" value="Putative ubiquitin-like modifier-activating enzyme 5"/>
    <property type="match status" value="1"/>
</dbReference>
<dbReference type="Gene3D" id="3.40.50.720">
    <property type="entry name" value="NAD(P)-binding Rossmann-like Domain"/>
    <property type="match status" value="1"/>
</dbReference>
<dbReference type="InterPro" id="IPR029752">
    <property type="entry name" value="D-isomer_DH_CS1"/>
</dbReference>
<dbReference type="InterPro" id="IPR045886">
    <property type="entry name" value="ThiF/MoeB/HesA"/>
</dbReference>
<dbReference type="InterPro" id="IPR000594">
    <property type="entry name" value="ThiF_NAD_FAD-bd"/>
</dbReference>
<dbReference type="InterPro" id="IPR035985">
    <property type="entry name" value="Ubiquitin-activating_enz"/>
</dbReference>
<dbReference type="PANTHER" id="PTHR10953">
    <property type="entry name" value="UBIQUITIN-ACTIVATING ENZYME E1"/>
    <property type="match status" value="1"/>
</dbReference>
<dbReference type="PANTHER" id="PTHR10953:SF9">
    <property type="entry name" value="UBIQUITIN-LIKE MODIFIER-ACTIVATING ENZYME 5"/>
    <property type="match status" value="1"/>
</dbReference>
<dbReference type="Pfam" id="PF00899">
    <property type="entry name" value="ThiF"/>
    <property type="match status" value="1"/>
</dbReference>
<dbReference type="SUPFAM" id="SSF69572">
    <property type="entry name" value="Activating enzymes of the ubiquitin-like proteins"/>
    <property type="match status" value="1"/>
</dbReference>
<accession>Q3KQ23</accession>
<proteinExistence type="evidence at transcript level"/>
<reference key="1">
    <citation type="submission" date="2005-10" db="EMBL/GenBank/DDBJ databases">
        <authorList>
            <consortium name="NIH - Xenopus Gene Collection (XGC) project"/>
        </authorList>
    </citation>
    <scope>NUCLEOTIDE SEQUENCE [LARGE SCALE MRNA]</scope>
    <source>
        <tissue>Embryo</tissue>
    </source>
</reference>
<gene>
    <name evidence="1" type="primary">uba5</name>
</gene>
<feature type="chain" id="PRO_0000391933" description="Ubiquitin-like modifier-activating enzyme 5">
    <location>
        <begin position="1"/>
        <end position="397"/>
    </location>
</feature>
<feature type="region of interest" description="Linker" evidence="1">
    <location>
        <begin position="342"/>
        <end position="372"/>
    </location>
</feature>
<feature type="short sequence motif" description="UFM1-interacting sequence (UIS)" evidence="1">
    <location>
        <begin position="329"/>
        <end position="341"/>
    </location>
</feature>
<feature type="short sequence motif" description="UFC1-binding sequence (UFC)" evidence="1">
    <location>
        <begin position="382"/>
        <end position="397"/>
    </location>
</feature>
<feature type="active site" description="Glycyl thioester intermediate" evidence="1">
    <location>
        <position position="244"/>
    </location>
</feature>
<feature type="binding site" evidence="1">
    <location>
        <position position="77"/>
    </location>
    <ligand>
        <name>ATP</name>
        <dbReference type="ChEBI" id="CHEBI:30616"/>
    </ligand>
</feature>
<feature type="binding site" evidence="1">
    <location>
        <position position="98"/>
    </location>
    <ligand>
        <name>ATP</name>
        <dbReference type="ChEBI" id="CHEBI:30616"/>
    </ligand>
</feature>
<feature type="binding site" evidence="1">
    <location>
        <position position="121"/>
    </location>
    <ligand>
        <name>ATP</name>
        <dbReference type="ChEBI" id="CHEBI:30616"/>
    </ligand>
</feature>
<feature type="binding site" evidence="1">
    <location>
        <position position="144"/>
    </location>
    <ligand>
        <name>ATP</name>
        <dbReference type="ChEBI" id="CHEBI:30616"/>
    </ligand>
</feature>
<feature type="binding site" evidence="1">
    <location>
        <position position="178"/>
    </location>
    <ligand>
        <name>ATP</name>
        <dbReference type="ChEBI" id="CHEBI:30616"/>
    </ligand>
</feature>
<feature type="binding site" evidence="1">
    <location>
        <position position="220"/>
    </location>
    <ligand>
        <name>Zn(2+)</name>
        <dbReference type="ChEBI" id="CHEBI:29105"/>
    </ligand>
</feature>
<feature type="binding site" evidence="1">
    <location>
        <position position="223"/>
    </location>
    <ligand>
        <name>Zn(2+)</name>
        <dbReference type="ChEBI" id="CHEBI:29105"/>
    </ligand>
</feature>
<feature type="binding site" evidence="1">
    <location>
        <position position="297"/>
    </location>
    <ligand>
        <name>Zn(2+)</name>
        <dbReference type="ChEBI" id="CHEBI:29105"/>
    </ligand>
</feature>
<feature type="binding site" evidence="1">
    <location>
        <position position="302"/>
    </location>
    <ligand>
        <name>Zn(2+)</name>
        <dbReference type="ChEBI" id="CHEBI:29105"/>
    </ligand>
</feature>
<sequence>MEGLIEELRSRVRELEEELDRVRNGQHEGHRTKIEKMSAEVVDSNPYSRLMALKRMGIVENYEKIRTFTVAVVGVGGVGSVTAEMLTRCGIGKLLLFDYDKVELANMNRLFFQPHQAGLSKVEAAEHTLRNINPDVQFEVHNYNITTLDNFQHFMDRISKGGLKEGSPVDLVLSCVDNFEARMAINTACNELGQVWMESGVSENAVSGHIQLIKPGETACFACAPPLVVAANIDEKTLKREGVCAASLPTTMGVVAGILVQNVLKYLLNFGTVSFYLGYNAMQDFFPTMAMKPNPQCDDKYCRKQQEEFKLKEAAKPKQETVVVEEEEVVHEDNDWGIELVSEVSEEELKAASGPVPDLPEGIKVAYTIPITKPTSGFTVEDSEQSLDELMAQMKNL</sequence>
<name>UBA5_XENLA</name>
<organism>
    <name type="scientific">Xenopus laevis</name>
    <name type="common">African clawed frog</name>
    <dbReference type="NCBI Taxonomy" id="8355"/>
    <lineage>
        <taxon>Eukaryota</taxon>
        <taxon>Metazoa</taxon>
        <taxon>Chordata</taxon>
        <taxon>Craniata</taxon>
        <taxon>Vertebrata</taxon>
        <taxon>Euteleostomi</taxon>
        <taxon>Amphibia</taxon>
        <taxon>Batrachia</taxon>
        <taxon>Anura</taxon>
        <taxon>Pipoidea</taxon>
        <taxon>Pipidae</taxon>
        <taxon>Xenopodinae</taxon>
        <taxon>Xenopus</taxon>
        <taxon>Xenopus</taxon>
    </lineage>
</organism>
<keyword id="KW-0067">ATP-binding</keyword>
<keyword id="KW-0963">Cytoplasm</keyword>
<keyword id="KW-0256">Endoplasmic reticulum</keyword>
<keyword id="KW-0333">Golgi apparatus</keyword>
<keyword id="KW-0472">Membrane</keyword>
<keyword id="KW-0479">Metal-binding</keyword>
<keyword id="KW-0547">Nucleotide-binding</keyword>
<keyword id="KW-0539">Nucleus</keyword>
<keyword id="KW-1185">Reference proteome</keyword>
<keyword id="KW-0833">Ubl conjugation pathway</keyword>
<keyword id="KW-0862">Zinc</keyword>
<evidence type="ECO:0000250" key="1">
    <source>
        <dbReference type="UniProtKB" id="Q9GZZ9"/>
    </source>
</evidence>
<evidence type="ECO:0000305" key="2"/>